<feature type="chain" id="PRO_1000197706" description="Succinate--CoA ligase [ADP-forming] subunit beta">
    <location>
        <begin position="1"/>
        <end position="388"/>
    </location>
</feature>
<feature type="domain" description="ATP-grasp" evidence="1">
    <location>
        <begin position="9"/>
        <end position="245"/>
    </location>
</feature>
<feature type="binding site" evidence="1">
    <location>
        <position position="46"/>
    </location>
    <ligand>
        <name>ATP</name>
        <dbReference type="ChEBI" id="CHEBI:30616"/>
    </ligand>
</feature>
<feature type="binding site" evidence="1">
    <location>
        <begin position="53"/>
        <end position="55"/>
    </location>
    <ligand>
        <name>ATP</name>
        <dbReference type="ChEBI" id="CHEBI:30616"/>
    </ligand>
</feature>
<feature type="binding site" evidence="1">
    <location>
        <position position="100"/>
    </location>
    <ligand>
        <name>ATP</name>
        <dbReference type="ChEBI" id="CHEBI:30616"/>
    </ligand>
</feature>
<feature type="binding site" evidence="1">
    <location>
        <position position="103"/>
    </location>
    <ligand>
        <name>ATP</name>
        <dbReference type="ChEBI" id="CHEBI:30616"/>
    </ligand>
</feature>
<feature type="binding site" evidence="1">
    <location>
        <position position="108"/>
    </location>
    <ligand>
        <name>ATP</name>
        <dbReference type="ChEBI" id="CHEBI:30616"/>
    </ligand>
</feature>
<feature type="binding site" evidence="1">
    <location>
        <position position="200"/>
    </location>
    <ligand>
        <name>Mg(2+)</name>
        <dbReference type="ChEBI" id="CHEBI:18420"/>
    </ligand>
</feature>
<feature type="binding site" evidence="1">
    <location>
        <position position="214"/>
    </location>
    <ligand>
        <name>Mg(2+)</name>
        <dbReference type="ChEBI" id="CHEBI:18420"/>
    </ligand>
</feature>
<feature type="binding site" evidence="1">
    <location>
        <position position="265"/>
    </location>
    <ligand>
        <name>substrate</name>
        <note>ligand shared with subunit alpha</note>
    </ligand>
</feature>
<feature type="binding site" evidence="1">
    <location>
        <begin position="322"/>
        <end position="324"/>
    </location>
    <ligand>
        <name>substrate</name>
        <note>ligand shared with subunit alpha</note>
    </ligand>
</feature>
<dbReference type="EC" id="6.2.1.5" evidence="1"/>
<dbReference type="EMBL" id="CP001154">
    <property type="protein sequence ID" value="ACO75394.1"/>
    <property type="molecule type" value="Genomic_DNA"/>
</dbReference>
<dbReference type="RefSeq" id="WP_012697880.1">
    <property type="nucleotide sequence ID" value="NC_012559.1"/>
</dbReference>
<dbReference type="SMR" id="C1DB55"/>
<dbReference type="STRING" id="557598.LHK_02412"/>
<dbReference type="GeneID" id="75109949"/>
<dbReference type="KEGG" id="lhk:LHK_02412"/>
<dbReference type="eggNOG" id="COG0045">
    <property type="taxonomic scope" value="Bacteria"/>
</dbReference>
<dbReference type="HOGENOM" id="CLU_037430_0_2_4"/>
<dbReference type="UniPathway" id="UPA00223">
    <property type="reaction ID" value="UER00999"/>
</dbReference>
<dbReference type="Proteomes" id="UP000002010">
    <property type="component" value="Chromosome"/>
</dbReference>
<dbReference type="GO" id="GO:0005829">
    <property type="term" value="C:cytosol"/>
    <property type="evidence" value="ECO:0007669"/>
    <property type="project" value="TreeGrafter"/>
</dbReference>
<dbReference type="GO" id="GO:0042709">
    <property type="term" value="C:succinate-CoA ligase complex"/>
    <property type="evidence" value="ECO:0007669"/>
    <property type="project" value="TreeGrafter"/>
</dbReference>
<dbReference type="GO" id="GO:0005524">
    <property type="term" value="F:ATP binding"/>
    <property type="evidence" value="ECO:0007669"/>
    <property type="project" value="UniProtKB-UniRule"/>
</dbReference>
<dbReference type="GO" id="GO:0000287">
    <property type="term" value="F:magnesium ion binding"/>
    <property type="evidence" value="ECO:0007669"/>
    <property type="project" value="UniProtKB-UniRule"/>
</dbReference>
<dbReference type="GO" id="GO:0004775">
    <property type="term" value="F:succinate-CoA ligase (ADP-forming) activity"/>
    <property type="evidence" value="ECO:0007669"/>
    <property type="project" value="UniProtKB-UniRule"/>
</dbReference>
<dbReference type="GO" id="GO:0004776">
    <property type="term" value="F:succinate-CoA ligase (GDP-forming) activity"/>
    <property type="evidence" value="ECO:0007669"/>
    <property type="project" value="RHEA"/>
</dbReference>
<dbReference type="GO" id="GO:0006104">
    <property type="term" value="P:succinyl-CoA metabolic process"/>
    <property type="evidence" value="ECO:0007669"/>
    <property type="project" value="TreeGrafter"/>
</dbReference>
<dbReference type="GO" id="GO:0006099">
    <property type="term" value="P:tricarboxylic acid cycle"/>
    <property type="evidence" value="ECO:0007669"/>
    <property type="project" value="UniProtKB-UniRule"/>
</dbReference>
<dbReference type="FunFam" id="3.30.1490.20:FF:000002">
    <property type="entry name" value="Succinate--CoA ligase [ADP-forming] subunit beta"/>
    <property type="match status" value="1"/>
</dbReference>
<dbReference type="FunFam" id="3.30.470.20:FF:000002">
    <property type="entry name" value="Succinate--CoA ligase [ADP-forming] subunit beta"/>
    <property type="match status" value="1"/>
</dbReference>
<dbReference type="FunFam" id="3.40.50.261:FF:000001">
    <property type="entry name" value="Succinate--CoA ligase [ADP-forming] subunit beta"/>
    <property type="match status" value="1"/>
</dbReference>
<dbReference type="Gene3D" id="3.30.1490.20">
    <property type="entry name" value="ATP-grasp fold, A domain"/>
    <property type="match status" value="1"/>
</dbReference>
<dbReference type="Gene3D" id="3.30.470.20">
    <property type="entry name" value="ATP-grasp fold, B domain"/>
    <property type="match status" value="1"/>
</dbReference>
<dbReference type="Gene3D" id="3.40.50.261">
    <property type="entry name" value="Succinyl-CoA synthetase domains"/>
    <property type="match status" value="1"/>
</dbReference>
<dbReference type="HAMAP" id="MF_00558">
    <property type="entry name" value="Succ_CoA_beta"/>
    <property type="match status" value="1"/>
</dbReference>
<dbReference type="InterPro" id="IPR011761">
    <property type="entry name" value="ATP-grasp"/>
</dbReference>
<dbReference type="InterPro" id="IPR013650">
    <property type="entry name" value="ATP-grasp_succ-CoA_synth-type"/>
</dbReference>
<dbReference type="InterPro" id="IPR013815">
    <property type="entry name" value="ATP_grasp_subdomain_1"/>
</dbReference>
<dbReference type="InterPro" id="IPR017866">
    <property type="entry name" value="Succ-CoA_synthase_bsu_CS"/>
</dbReference>
<dbReference type="InterPro" id="IPR005811">
    <property type="entry name" value="SUCC_ACL_C"/>
</dbReference>
<dbReference type="InterPro" id="IPR005809">
    <property type="entry name" value="Succ_CoA_ligase-like_bsu"/>
</dbReference>
<dbReference type="InterPro" id="IPR016102">
    <property type="entry name" value="Succinyl-CoA_synth-like"/>
</dbReference>
<dbReference type="NCBIfam" id="NF001913">
    <property type="entry name" value="PRK00696.1"/>
    <property type="match status" value="1"/>
</dbReference>
<dbReference type="NCBIfam" id="TIGR01016">
    <property type="entry name" value="sucCoAbeta"/>
    <property type="match status" value="1"/>
</dbReference>
<dbReference type="PANTHER" id="PTHR11815:SF10">
    <property type="entry name" value="SUCCINATE--COA LIGASE [GDP-FORMING] SUBUNIT BETA, MITOCHONDRIAL"/>
    <property type="match status" value="1"/>
</dbReference>
<dbReference type="PANTHER" id="PTHR11815">
    <property type="entry name" value="SUCCINYL-COA SYNTHETASE BETA CHAIN"/>
    <property type="match status" value="1"/>
</dbReference>
<dbReference type="Pfam" id="PF08442">
    <property type="entry name" value="ATP-grasp_2"/>
    <property type="match status" value="1"/>
</dbReference>
<dbReference type="Pfam" id="PF00549">
    <property type="entry name" value="Ligase_CoA"/>
    <property type="match status" value="1"/>
</dbReference>
<dbReference type="PIRSF" id="PIRSF001554">
    <property type="entry name" value="SucCS_beta"/>
    <property type="match status" value="1"/>
</dbReference>
<dbReference type="SUPFAM" id="SSF56059">
    <property type="entry name" value="Glutathione synthetase ATP-binding domain-like"/>
    <property type="match status" value="1"/>
</dbReference>
<dbReference type="SUPFAM" id="SSF52210">
    <property type="entry name" value="Succinyl-CoA synthetase domains"/>
    <property type="match status" value="1"/>
</dbReference>
<dbReference type="PROSITE" id="PS50975">
    <property type="entry name" value="ATP_GRASP"/>
    <property type="match status" value="1"/>
</dbReference>
<dbReference type="PROSITE" id="PS01217">
    <property type="entry name" value="SUCCINYL_COA_LIG_3"/>
    <property type="match status" value="1"/>
</dbReference>
<gene>
    <name evidence="1" type="primary">sucC</name>
    <name type="ordered locus">LHK_02412</name>
</gene>
<protein>
    <recommendedName>
        <fullName evidence="1">Succinate--CoA ligase [ADP-forming] subunit beta</fullName>
        <ecNumber evidence="1">6.2.1.5</ecNumber>
    </recommendedName>
    <alternativeName>
        <fullName evidence="1">Succinyl-CoA synthetase subunit beta</fullName>
        <shortName evidence="1">SCS-beta</shortName>
    </alternativeName>
</protein>
<sequence>MNLHEYQAKELLAKYGLPVQQGILASNADEAAAAFDQLGGKFAVVKAQVHAGGRGKAGGVKVVKSREEAADVAATLIGKNLVTYQTDANGQPVNSVLVCEDMYPVERELYLGAVVDRSTRRVTFMASTEGGVEIEEVAHNTPEKILKVTVDPLVGLLPFQAREVAFALGLKDKQVNEFVKLMTGAYRAFVENDFALFEINPLAVRANGALACVDAKVGIDSNALYRLPAVAALRDKSQENERELKASEFDLNYVALEGNIGCMVNGAGLAMATMDIIKLKGGQPANFLDVGGGATKERVVEAFKLILADPSVKGVLINIFGGIVRCDMIAEAIIAAVKEVNVTVPVVVRLEGNNAELGARLLEESGLKLTSAQGLNDAAEKIVAAVGA</sequence>
<reference key="1">
    <citation type="journal article" date="2009" name="PLoS Genet.">
        <title>The complete genome and proteome of Laribacter hongkongensis reveal potential mechanisms for adaptations to different temperatures and habitats.</title>
        <authorList>
            <person name="Woo P.C.Y."/>
            <person name="Lau S.K.P."/>
            <person name="Tse H."/>
            <person name="Teng J.L.L."/>
            <person name="Curreem S.O."/>
            <person name="Tsang A.K.L."/>
            <person name="Fan R.Y.Y."/>
            <person name="Wong G.K.M."/>
            <person name="Huang Y."/>
            <person name="Loman N.J."/>
            <person name="Snyder L.A.S."/>
            <person name="Cai J.J."/>
            <person name="Huang J.-D."/>
            <person name="Mak W."/>
            <person name="Pallen M.J."/>
            <person name="Lok S."/>
            <person name="Yuen K.-Y."/>
        </authorList>
    </citation>
    <scope>NUCLEOTIDE SEQUENCE [LARGE SCALE GENOMIC DNA]</scope>
    <source>
        <strain>HLHK9</strain>
    </source>
</reference>
<comment type="function">
    <text evidence="1">Succinyl-CoA synthetase functions in the citric acid cycle (TCA), coupling the hydrolysis of succinyl-CoA to the synthesis of either ATP or GTP and thus represents the only step of substrate-level phosphorylation in the TCA. The beta subunit provides nucleotide specificity of the enzyme and binds the substrate succinate, while the binding sites for coenzyme A and phosphate are found in the alpha subunit.</text>
</comment>
<comment type="catalytic activity">
    <reaction evidence="1">
        <text>succinate + ATP + CoA = succinyl-CoA + ADP + phosphate</text>
        <dbReference type="Rhea" id="RHEA:17661"/>
        <dbReference type="ChEBI" id="CHEBI:30031"/>
        <dbReference type="ChEBI" id="CHEBI:30616"/>
        <dbReference type="ChEBI" id="CHEBI:43474"/>
        <dbReference type="ChEBI" id="CHEBI:57287"/>
        <dbReference type="ChEBI" id="CHEBI:57292"/>
        <dbReference type="ChEBI" id="CHEBI:456216"/>
        <dbReference type="EC" id="6.2.1.5"/>
    </reaction>
    <physiologicalReaction direction="right-to-left" evidence="1">
        <dbReference type="Rhea" id="RHEA:17663"/>
    </physiologicalReaction>
</comment>
<comment type="catalytic activity">
    <reaction evidence="1">
        <text>GTP + succinate + CoA = succinyl-CoA + GDP + phosphate</text>
        <dbReference type="Rhea" id="RHEA:22120"/>
        <dbReference type="ChEBI" id="CHEBI:30031"/>
        <dbReference type="ChEBI" id="CHEBI:37565"/>
        <dbReference type="ChEBI" id="CHEBI:43474"/>
        <dbReference type="ChEBI" id="CHEBI:57287"/>
        <dbReference type="ChEBI" id="CHEBI:57292"/>
        <dbReference type="ChEBI" id="CHEBI:58189"/>
    </reaction>
    <physiologicalReaction direction="right-to-left" evidence="1">
        <dbReference type="Rhea" id="RHEA:22122"/>
    </physiologicalReaction>
</comment>
<comment type="cofactor">
    <cofactor evidence="1">
        <name>Mg(2+)</name>
        <dbReference type="ChEBI" id="CHEBI:18420"/>
    </cofactor>
    <text evidence="1">Binds 1 Mg(2+) ion per subunit.</text>
</comment>
<comment type="pathway">
    <text evidence="1">Carbohydrate metabolism; tricarboxylic acid cycle; succinate from succinyl-CoA (ligase route): step 1/1.</text>
</comment>
<comment type="subunit">
    <text evidence="1">Heterotetramer of two alpha and two beta subunits.</text>
</comment>
<comment type="similarity">
    <text evidence="1">Belongs to the succinate/malate CoA ligase beta subunit family.</text>
</comment>
<accession>C1DB55</accession>
<keyword id="KW-0067">ATP-binding</keyword>
<keyword id="KW-0436">Ligase</keyword>
<keyword id="KW-0460">Magnesium</keyword>
<keyword id="KW-0479">Metal-binding</keyword>
<keyword id="KW-0547">Nucleotide-binding</keyword>
<keyword id="KW-1185">Reference proteome</keyword>
<keyword id="KW-0816">Tricarboxylic acid cycle</keyword>
<proteinExistence type="inferred from homology"/>
<name>SUCC_LARHH</name>
<organism>
    <name type="scientific">Laribacter hongkongensis (strain HLHK9)</name>
    <dbReference type="NCBI Taxonomy" id="557598"/>
    <lineage>
        <taxon>Bacteria</taxon>
        <taxon>Pseudomonadati</taxon>
        <taxon>Pseudomonadota</taxon>
        <taxon>Betaproteobacteria</taxon>
        <taxon>Neisseriales</taxon>
        <taxon>Aquaspirillaceae</taxon>
        <taxon>Laribacter</taxon>
    </lineage>
</organism>
<evidence type="ECO:0000255" key="1">
    <source>
        <dbReference type="HAMAP-Rule" id="MF_00558"/>
    </source>
</evidence>